<gene>
    <name evidence="1" type="primary">rplP</name>
    <name type="ordered locus">HP_1312</name>
</gene>
<feature type="chain" id="PRO_0000062115" description="Large ribosomal subunit protein uL16">
    <location>
        <begin position="1"/>
        <end position="141"/>
    </location>
</feature>
<feature type="region of interest" description="Disordered" evidence="2">
    <location>
        <begin position="1"/>
        <end position="23"/>
    </location>
</feature>
<name>RL16_HELPY</name>
<sequence>MLMPKRTKYRKQMKGRNRGKAHRGNSIAFGDIAIKAIEHGRIDSRQIESARVAMTRHIKRAGKVWIRVFPDKPLTAKPLETRMGKGKGSVEKWVMNIKPGRIVYEMLGIEEGLAREALALAQSKLPFKTKIVTCESENEIY</sequence>
<protein>
    <recommendedName>
        <fullName evidence="1">Large ribosomal subunit protein uL16</fullName>
    </recommendedName>
    <alternativeName>
        <fullName evidence="3">50S ribosomal protein L16</fullName>
    </alternativeName>
</protein>
<proteinExistence type="inferred from homology"/>
<organism>
    <name type="scientific">Helicobacter pylori (strain ATCC 700392 / 26695)</name>
    <name type="common">Campylobacter pylori</name>
    <dbReference type="NCBI Taxonomy" id="85962"/>
    <lineage>
        <taxon>Bacteria</taxon>
        <taxon>Pseudomonadati</taxon>
        <taxon>Campylobacterota</taxon>
        <taxon>Epsilonproteobacteria</taxon>
        <taxon>Campylobacterales</taxon>
        <taxon>Helicobacteraceae</taxon>
        <taxon>Helicobacter</taxon>
    </lineage>
</organism>
<reference key="1">
    <citation type="journal article" date="1997" name="Nature">
        <title>The complete genome sequence of the gastric pathogen Helicobacter pylori.</title>
        <authorList>
            <person name="Tomb J.-F."/>
            <person name="White O."/>
            <person name="Kerlavage A.R."/>
            <person name="Clayton R.A."/>
            <person name="Sutton G.G."/>
            <person name="Fleischmann R.D."/>
            <person name="Ketchum K.A."/>
            <person name="Klenk H.-P."/>
            <person name="Gill S.R."/>
            <person name="Dougherty B.A."/>
            <person name="Nelson K.E."/>
            <person name="Quackenbush J."/>
            <person name="Zhou L."/>
            <person name="Kirkness E.F."/>
            <person name="Peterson S.N."/>
            <person name="Loftus B.J."/>
            <person name="Richardson D.L."/>
            <person name="Dodson R.J."/>
            <person name="Khalak H.G."/>
            <person name="Glodek A."/>
            <person name="McKenney K."/>
            <person name="FitzGerald L.M."/>
            <person name="Lee N."/>
            <person name="Adams M.D."/>
            <person name="Hickey E.K."/>
            <person name="Berg D.E."/>
            <person name="Gocayne J.D."/>
            <person name="Utterback T.R."/>
            <person name="Peterson J.D."/>
            <person name="Kelley J.M."/>
            <person name="Cotton M.D."/>
            <person name="Weidman J.F."/>
            <person name="Fujii C."/>
            <person name="Bowman C."/>
            <person name="Watthey L."/>
            <person name="Wallin E."/>
            <person name="Hayes W.S."/>
            <person name="Borodovsky M."/>
            <person name="Karp P.D."/>
            <person name="Smith H.O."/>
            <person name="Fraser C.M."/>
            <person name="Venter J.C."/>
        </authorList>
    </citation>
    <scope>NUCLEOTIDE SEQUENCE [LARGE SCALE GENOMIC DNA]</scope>
    <source>
        <strain>ATCC 700392 / 26695</strain>
    </source>
</reference>
<accession>P56041</accession>
<comment type="function">
    <text evidence="1">Binds 23S rRNA and is also seen to make contacts with the A and possibly P site tRNAs.</text>
</comment>
<comment type="subunit">
    <text evidence="1">Part of the 50S ribosomal subunit.</text>
</comment>
<comment type="similarity">
    <text evidence="1">Belongs to the universal ribosomal protein uL16 family.</text>
</comment>
<keyword id="KW-1185">Reference proteome</keyword>
<keyword id="KW-0687">Ribonucleoprotein</keyword>
<keyword id="KW-0689">Ribosomal protein</keyword>
<keyword id="KW-0694">RNA-binding</keyword>
<keyword id="KW-0699">rRNA-binding</keyword>
<keyword id="KW-0820">tRNA-binding</keyword>
<evidence type="ECO:0000255" key="1">
    <source>
        <dbReference type="HAMAP-Rule" id="MF_01342"/>
    </source>
</evidence>
<evidence type="ECO:0000256" key="2">
    <source>
        <dbReference type="SAM" id="MobiDB-lite"/>
    </source>
</evidence>
<evidence type="ECO:0000305" key="3"/>
<dbReference type="EMBL" id="AE000511">
    <property type="protein sequence ID" value="AAD08351.1"/>
    <property type="molecule type" value="Genomic_DNA"/>
</dbReference>
<dbReference type="RefSeq" id="NP_208104.1">
    <property type="nucleotide sequence ID" value="NC_000915.1"/>
</dbReference>
<dbReference type="RefSeq" id="WP_000928961.1">
    <property type="nucleotide sequence ID" value="NC_018939.1"/>
</dbReference>
<dbReference type="SMR" id="P56041"/>
<dbReference type="DIP" id="DIP-3634N"/>
<dbReference type="FunCoup" id="P56041">
    <property type="interactions" value="398"/>
</dbReference>
<dbReference type="IntAct" id="P56041">
    <property type="interactions" value="9"/>
</dbReference>
<dbReference type="MINT" id="P56041"/>
<dbReference type="STRING" id="85962.HP_1312"/>
<dbReference type="PaxDb" id="85962-C694_06775"/>
<dbReference type="EnsemblBacteria" id="AAD08351">
    <property type="protein sequence ID" value="AAD08351"/>
    <property type="gene ID" value="HP_1312"/>
</dbReference>
<dbReference type="GeneID" id="93237557"/>
<dbReference type="KEGG" id="heo:C694_06775"/>
<dbReference type="KEGG" id="hpy:HP_1312"/>
<dbReference type="PATRIC" id="fig|85962.47.peg.1406"/>
<dbReference type="eggNOG" id="COG0197">
    <property type="taxonomic scope" value="Bacteria"/>
</dbReference>
<dbReference type="InParanoid" id="P56041"/>
<dbReference type="OrthoDB" id="9802589at2"/>
<dbReference type="PhylomeDB" id="P56041"/>
<dbReference type="Proteomes" id="UP000000429">
    <property type="component" value="Chromosome"/>
</dbReference>
<dbReference type="GO" id="GO:0022625">
    <property type="term" value="C:cytosolic large ribosomal subunit"/>
    <property type="evidence" value="ECO:0000318"/>
    <property type="project" value="GO_Central"/>
</dbReference>
<dbReference type="GO" id="GO:0019843">
    <property type="term" value="F:rRNA binding"/>
    <property type="evidence" value="ECO:0000318"/>
    <property type="project" value="GO_Central"/>
</dbReference>
<dbReference type="GO" id="GO:0003735">
    <property type="term" value="F:structural constituent of ribosome"/>
    <property type="evidence" value="ECO:0000318"/>
    <property type="project" value="GO_Central"/>
</dbReference>
<dbReference type="GO" id="GO:0000049">
    <property type="term" value="F:tRNA binding"/>
    <property type="evidence" value="ECO:0007669"/>
    <property type="project" value="UniProtKB-KW"/>
</dbReference>
<dbReference type="GO" id="GO:0006412">
    <property type="term" value="P:translation"/>
    <property type="evidence" value="ECO:0007669"/>
    <property type="project" value="UniProtKB-UniRule"/>
</dbReference>
<dbReference type="CDD" id="cd01433">
    <property type="entry name" value="Ribosomal_L16_L10e"/>
    <property type="match status" value="1"/>
</dbReference>
<dbReference type="FunFam" id="3.90.1170.10:FF:000001">
    <property type="entry name" value="50S ribosomal protein L16"/>
    <property type="match status" value="1"/>
</dbReference>
<dbReference type="Gene3D" id="3.90.1170.10">
    <property type="entry name" value="Ribosomal protein L10e/L16"/>
    <property type="match status" value="1"/>
</dbReference>
<dbReference type="HAMAP" id="MF_01342">
    <property type="entry name" value="Ribosomal_uL16"/>
    <property type="match status" value="1"/>
</dbReference>
<dbReference type="InterPro" id="IPR047873">
    <property type="entry name" value="Ribosomal_uL16"/>
</dbReference>
<dbReference type="InterPro" id="IPR000114">
    <property type="entry name" value="Ribosomal_uL16_bact-type"/>
</dbReference>
<dbReference type="InterPro" id="IPR020798">
    <property type="entry name" value="Ribosomal_uL16_CS"/>
</dbReference>
<dbReference type="InterPro" id="IPR016180">
    <property type="entry name" value="Ribosomal_uL16_dom"/>
</dbReference>
<dbReference type="InterPro" id="IPR036920">
    <property type="entry name" value="Ribosomal_uL16_sf"/>
</dbReference>
<dbReference type="NCBIfam" id="TIGR01164">
    <property type="entry name" value="rplP_bact"/>
    <property type="match status" value="1"/>
</dbReference>
<dbReference type="PANTHER" id="PTHR12220">
    <property type="entry name" value="50S/60S RIBOSOMAL PROTEIN L16"/>
    <property type="match status" value="1"/>
</dbReference>
<dbReference type="PANTHER" id="PTHR12220:SF13">
    <property type="entry name" value="LARGE RIBOSOMAL SUBUNIT PROTEIN UL16M"/>
    <property type="match status" value="1"/>
</dbReference>
<dbReference type="Pfam" id="PF00252">
    <property type="entry name" value="Ribosomal_L16"/>
    <property type="match status" value="1"/>
</dbReference>
<dbReference type="PRINTS" id="PR00060">
    <property type="entry name" value="RIBOSOMALL16"/>
</dbReference>
<dbReference type="SUPFAM" id="SSF54686">
    <property type="entry name" value="Ribosomal protein L16p/L10e"/>
    <property type="match status" value="1"/>
</dbReference>
<dbReference type="PROSITE" id="PS00586">
    <property type="entry name" value="RIBOSOMAL_L16_1"/>
    <property type="match status" value="1"/>
</dbReference>
<dbReference type="PROSITE" id="PS00701">
    <property type="entry name" value="RIBOSOMAL_L16_2"/>
    <property type="match status" value="1"/>
</dbReference>